<protein>
    <recommendedName>
        <fullName evidence="3">Large ribosomal subunit protein uL3c</fullName>
    </recommendedName>
    <alternativeName>
        <fullName>50S ribosomal protein L3, chloroplastic</fullName>
    </alternativeName>
</protein>
<accession>Q1XDH4</accession>
<keyword id="KW-0150">Chloroplast</keyword>
<keyword id="KW-0934">Plastid</keyword>
<keyword id="KW-0687">Ribonucleoprotein</keyword>
<keyword id="KW-0689">Ribosomal protein</keyword>
<keyword id="KW-0694">RNA-binding</keyword>
<keyword id="KW-0699">rRNA-binding</keyword>
<reference key="1">
    <citation type="submission" date="2003-11" db="EMBL/GenBank/DDBJ databases">
        <title>Whole genome sequence of Porphyra yezoensis chloroplast.</title>
        <authorList>
            <person name="Kunimoto M."/>
            <person name="Morishima K."/>
            <person name="Yoshikawa M."/>
            <person name="Fukuda S."/>
            <person name="Kobayashi T."/>
            <person name="Kobayashi M."/>
            <person name="Okazaki T."/>
            <person name="Ohara I."/>
            <person name="Nakayama I."/>
        </authorList>
    </citation>
    <scope>NUCLEOTIDE SEQUENCE [LARGE SCALE GENOMIC DNA]</scope>
    <source>
        <strain>U-51</strain>
    </source>
</reference>
<dbReference type="EMBL" id="AP006715">
    <property type="protein sequence ID" value="BAE92437.1"/>
    <property type="molecule type" value="Genomic_DNA"/>
</dbReference>
<dbReference type="RefSeq" id="YP_536994.1">
    <property type="nucleotide sequence ID" value="NC_007932.1"/>
</dbReference>
<dbReference type="SMR" id="Q1XDH4"/>
<dbReference type="GeneID" id="3978918"/>
<dbReference type="GO" id="GO:0009507">
    <property type="term" value="C:chloroplast"/>
    <property type="evidence" value="ECO:0007669"/>
    <property type="project" value="UniProtKB-SubCell"/>
</dbReference>
<dbReference type="GO" id="GO:0022625">
    <property type="term" value="C:cytosolic large ribosomal subunit"/>
    <property type="evidence" value="ECO:0007669"/>
    <property type="project" value="TreeGrafter"/>
</dbReference>
<dbReference type="GO" id="GO:0019843">
    <property type="term" value="F:rRNA binding"/>
    <property type="evidence" value="ECO:0007669"/>
    <property type="project" value="UniProtKB-UniRule"/>
</dbReference>
<dbReference type="GO" id="GO:0003735">
    <property type="term" value="F:structural constituent of ribosome"/>
    <property type="evidence" value="ECO:0007669"/>
    <property type="project" value="InterPro"/>
</dbReference>
<dbReference type="GO" id="GO:0006412">
    <property type="term" value="P:translation"/>
    <property type="evidence" value="ECO:0007669"/>
    <property type="project" value="UniProtKB-UniRule"/>
</dbReference>
<dbReference type="FunFam" id="3.30.160.810:FF:000001">
    <property type="entry name" value="50S ribosomal protein L3"/>
    <property type="match status" value="1"/>
</dbReference>
<dbReference type="FunFam" id="2.40.30.10:FF:000065">
    <property type="entry name" value="50S ribosomal protein L3, chloroplastic"/>
    <property type="match status" value="1"/>
</dbReference>
<dbReference type="Gene3D" id="3.30.160.810">
    <property type="match status" value="1"/>
</dbReference>
<dbReference type="Gene3D" id="2.40.30.10">
    <property type="entry name" value="Translation factors"/>
    <property type="match status" value="1"/>
</dbReference>
<dbReference type="HAMAP" id="MF_01325_B">
    <property type="entry name" value="Ribosomal_uL3_B"/>
    <property type="match status" value="1"/>
</dbReference>
<dbReference type="InterPro" id="IPR000597">
    <property type="entry name" value="Ribosomal_uL3"/>
</dbReference>
<dbReference type="InterPro" id="IPR019927">
    <property type="entry name" value="Ribosomal_uL3_bac/org-type"/>
</dbReference>
<dbReference type="InterPro" id="IPR019926">
    <property type="entry name" value="Ribosomal_uL3_CS"/>
</dbReference>
<dbReference type="InterPro" id="IPR009000">
    <property type="entry name" value="Transl_B-barrel_sf"/>
</dbReference>
<dbReference type="NCBIfam" id="TIGR03625">
    <property type="entry name" value="L3_bact"/>
    <property type="match status" value="1"/>
</dbReference>
<dbReference type="PANTHER" id="PTHR11229">
    <property type="entry name" value="50S RIBOSOMAL PROTEIN L3"/>
    <property type="match status" value="1"/>
</dbReference>
<dbReference type="PANTHER" id="PTHR11229:SF16">
    <property type="entry name" value="LARGE RIBOSOMAL SUBUNIT PROTEIN UL3C"/>
    <property type="match status" value="1"/>
</dbReference>
<dbReference type="Pfam" id="PF00297">
    <property type="entry name" value="Ribosomal_L3"/>
    <property type="match status" value="1"/>
</dbReference>
<dbReference type="SUPFAM" id="SSF50447">
    <property type="entry name" value="Translation proteins"/>
    <property type="match status" value="1"/>
</dbReference>
<dbReference type="PROSITE" id="PS00474">
    <property type="entry name" value="RIBOSOMAL_L3"/>
    <property type="match status" value="1"/>
</dbReference>
<evidence type="ECO:0000250" key="1"/>
<evidence type="ECO:0000256" key="2">
    <source>
        <dbReference type="SAM" id="MobiDB-lite"/>
    </source>
</evidence>
<evidence type="ECO:0000305" key="3"/>
<geneLocation type="chloroplast"/>
<gene>
    <name type="primary">rpl3</name>
</gene>
<comment type="function">
    <text evidence="1">One of the primary rRNA binding proteins, it binds directly near the 3'-end of the 23S rRNA, where it nucleates assembly of the 50S subunit.</text>
</comment>
<comment type="subunit">
    <text>Part of the 50S ribosomal subunit.</text>
</comment>
<comment type="subcellular location">
    <subcellularLocation>
        <location>Plastid</location>
        <location>Chloroplast</location>
    </subcellularLocation>
</comment>
<comment type="similarity">
    <text evidence="3">Belongs to the universal ribosomal protein uL3 family.</text>
</comment>
<sequence length="205" mass="22061">MSVGILGTKVGMTQFFDEAGLSIPVTVIQVGPCVITQIKAVSTDGYNAIQVGYKQVAEQKLNKPLLGHLKKSQAPPLKYLREYEMKSTDDFEVSQILSTDLFQVGQKINVSSRSVGKGFSGYQKRHHFSRGPMSHGSKNHRQPGSIGAGTTPGRVYPGKNMAGQLGNKKVTIKNLQIVSINSENDLLIVKGAVPGKPGALVKISK</sequence>
<organism>
    <name type="scientific">Pyropia yezoensis</name>
    <name type="common">Susabi-nori</name>
    <name type="synonym">Porphyra yezoensis</name>
    <dbReference type="NCBI Taxonomy" id="2788"/>
    <lineage>
        <taxon>Eukaryota</taxon>
        <taxon>Rhodophyta</taxon>
        <taxon>Bangiophyceae</taxon>
        <taxon>Bangiales</taxon>
        <taxon>Bangiaceae</taxon>
        <taxon>Pyropia</taxon>
    </lineage>
</organism>
<feature type="chain" id="PRO_0000241438" description="Large ribosomal subunit protein uL3c">
    <location>
        <begin position="1"/>
        <end position="205"/>
    </location>
</feature>
<feature type="region of interest" description="Disordered" evidence="2">
    <location>
        <begin position="129"/>
        <end position="154"/>
    </location>
</feature>
<proteinExistence type="inferred from homology"/>
<name>RK3_PYRYE</name>